<accession>Q9LVQ0</accession>
<sequence>MATTRMVRVSQDGSGDYCSVQDAIDSVPLGNTCRTVIRLSPGIYRQPVYVPKRKNFITFAGISPEITVLTWNNTASKIEHHQASRVIGTGTFGCGSVIVEGEDFIAENITFENSAPEGSGQAVAIRVTADRCAFYNCRFLGWQDTLYLHHGKQYLKDCYIEGSVDFIFGNSTALLEHCHIHCKSQGFITAQSRKSSQESTGYVFLRCVITGNGQSGYMYLGRPWGPFGRVVLAYTYMDACIRNVGWHNWGNAENERSACFYEYRCFGPGSCSSERVPWSRELMDDEAGHFVHHSFVDPEQDRPWLCLRMGVKTPYSA</sequence>
<organism>
    <name type="scientific">Arabidopsis thaliana</name>
    <name type="common">Mouse-ear cress</name>
    <dbReference type="NCBI Taxonomy" id="3702"/>
    <lineage>
        <taxon>Eukaryota</taxon>
        <taxon>Viridiplantae</taxon>
        <taxon>Streptophyta</taxon>
        <taxon>Embryophyta</taxon>
        <taxon>Tracheophyta</taxon>
        <taxon>Spermatophyta</taxon>
        <taxon>Magnoliopsida</taxon>
        <taxon>eudicotyledons</taxon>
        <taxon>Gunneridae</taxon>
        <taxon>Pentapetalae</taxon>
        <taxon>rosids</taxon>
        <taxon>malvids</taxon>
        <taxon>Brassicales</taxon>
        <taxon>Brassicaceae</taxon>
        <taxon>Camelineae</taxon>
        <taxon>Arabidopsis</taxon>
    </lineage>
</organism>
<protein>
    <recommendedName>
        <fullName>Pectinesterase 31</fullName>
        <shortName>PE 31</shortName>
        <ecNumber evidence="4">3.1.1.11</ecNumber>
    </recommendedName>
    <alternativeName>
        <fullName>Pectin methylesterase 31</fullName>
        <shortName>AtPME31</shortName>
    </alternativeName>
</protein>
<proteinExistence type="evidence at protein level"/>
<evidence type="ECO:0000250" key="1"/>
<evidence type="ECO:0000255" key="2">
    <source>
        <dbReference type="PROSITE-ProRule" id="PRU10040"/>
    </source>
</evidence>
<evidence type="ECO:0000269" key="3">
    <source>
    </source>
</evidence>
<evidence type="ECO:0000269" key="4">
    <source>
    </source>
</evidence>
<evidence type="ECO:0000305" key="5"/>
<dbReference type="EC" id="3.1.1.11" evidence="4"/>
<dbReference type="EMBL" id="AB018121">
    <property type="protein sequence ID" value="BAB01985.1"/>
    <property type="molecule type" value="Genomic_DNA"/>
</dbReference>
<dbReference type="EMBL" id="CP002686">
    <property type="protein sequence ID" value="AEE77534.1"/>
    <property type="molecule type" value="Genomic_DNA"/>
</dbReference>
<dbReference type="EMBL" id="AY070091">
    <property type="protein sequence ID" value="AAL49785.1"/>
    <property type="molecule type" value="mRNA"/>
</dbReference>
<dbReference type="EMBL" id="AY096561">
    <property type="protein sequence ID" value="AAM20211.1"/>
    <property type="molecule type" value="mRNA"/>
</dbReference>
<dbReference type="EMBL" id="AY084418">
    <property type="protein sequence ID" value="AAM60992.1"/>
    <property type="molecule type" value="mRNA"/>
</dbReference>
<dbReference type="RefSeq" id="NP_566842.1">
    <property type="nucleotide sequence ID" value="NM_113832.4"/>
</dbReference>
<dbReference type="SMR" id="Q9LVQ0"/>
<dbReference type="BioGRID" id="7885">
    <property type="interactions" value="3"/>
</dbReference>
<dbReference type="FunCoup" id="Q9LVQ0">
    <property type="interactions" value="259"/>
</dbReference>
<dbReference type="IntAct" id="Q9LVQ0">
    <property type="interactions" value="2"/>
</dbReference>
<dbReference type="STRING" id="3702.Q9LVQ0"/>
<dbReference type="PaxDb" id="3702-AT3G29090.1"/>
<dbReference type="ProteomicsDB" id="236645"/>
<dbReference type="EnsemblPlants" id="AT3G29090.1">
    <property type="protein sequence ID" value="AT3G29090.1"/>
    <property type="gene ID" value="AT3G29090"/>
</dbReference>
<dbReference type="GeneID" id="822556"/>
<dbReference type="Gramene" id="AT3G29090.1">
    <property type="protein sequence ID" value="AT3G29090.1"/>
    <property type="gene ID" value="AT3G29090"/>
</dbReference>
<dbReference type="KEGG" id="ath:AT3G29090"/>
<dbReference type="Araport" id="AT3G29090"/>
<dbReference type="TAIR" id="AT3G29090">
    <property type="gene designation" value="PME31"/>
</dbReference>
<dbReference type="eggNOG" id="ENOG502QVK0">
    <property type="taxonomic scope" value="Eukaryota"/>
</dbReference>
<dbReference type="HOGENOM" id="CLU_012243_3_1_1"/>
<dbReference type="InParanoid" id="Q9LVQ0"/>
<dbReference type="OMA" id="WDRSENE"/>
<dbReference type="PhylomeDB" id="Q9LVQ0"/>
<dbReference type="BioCyc" id="ARA:AT3G29090-MONOMER"/>
<dbReference type="BRENDA" id="3.1.1.11">
    <property type="organism ID" value="399"/>
</dbReference>
<dbReference type="UniPathway" id="UPA00545">
    <property type="reaction ID" value="UER00823"/>
</dbReference>
<dbReference type="PRO" id="PR:Q9LVQ0"/>
<dbReference type="Proteomes" id="UP000006548">
    <property type="component" value="Chromosome 3"/>
</dbReference>
<dbReference type="ExpressionAtlas" id="Q9LVQ0">
    <property type="expression patterns" value="baseline and differential"/>
</dbReference>
<dbReference type="GO" id="GO:0030599">
    <property type="term" value="F:pectinesterase activity"/>
    <property type="evidence" value="ECO:0000314"/>
    <property type="project" value="TAIR"/>
</dbReference>
<dbReference type="GO" id="GO:0042545">
    <property type="term" value="P:cell wall modification"/>
    <property type="evidence" value="ECO:0007669"/>
    <property type="project" value="InterPro"/>
</dbReference>
<dbReference type="GO" id="GO:0050829">
    <property type="term" value="P:defense response to Gram-negative bacterium"/>
    <property type="evidence" value="ECO:0000315"/>
    <property type="project" value="TAIR"/>
</dbReference>
<dbReference type="GO" id="GO:0045490">
    <property type="term" value="P:pectin catabolic process"/>
    <property type="evidence" value="ECO:0007669"/>
    <property type="project" value="UniProtKB-UniPathway"/>
</dbReference>
<dbReference type="GO" id="GO:0045488">
    <property type="term" value="P:pectin metabolic process"/>
    <property type="evidence" value="ECO:0000314"/>
    <property type="project" value="TAIR"/>
</dbReference>
<dbReference type="FunFam" id="2.160.20.10:FF:000030">
    <property type="entry name" value="Pectinesterase"/>
    <property type="match status" value="1"/>
</dbReference>
<dbReference type="Gene3D" id="2.160.20.10">
    <property type="entry name" value="Single-stranded right-handed beta-helix, Pectin lyase-like"/>
    <property type="match status" value="1"/>
</dbReference>
<dbReference type="InterPro" id="IPR012334">
    <property type="entry name" value="Pectin_lyas_fold"/>
</dbReference>
<dbReference type="InterPro" id="IPR011050">
    <property type="entry name" value="Pectin_lyase_fold/virulence"/>
</dbReference>
<dbReference type="InterPro" id="IPR033131">
    <property type="entry name" value="Pectinesterase_Asp_AS"/>
</dbReference>
<dbReference type="InterPro" id="IPR000070">
    <property type="entry name" value="Pectinesterase_cat"/>
</dbReference>
<dbReference type="PANTHER" id="PTHR31321">
    <property type="entry name" value="ACYL-COA THIOESTER HYDROLASE YBHC-RELATED"/>
    <property type="match status" value="1"/>
</dbReference>
<dbReference type="PANTHER" id="PTHR31321:SF12">
    <property type="entry name" value="PECTINESTERASE 31"/>
    <property type="match status" value="1"/>
</dbReference>
<dbReference type="Pfam" id="PF01095">
    <property type="entry name" value="Pectinesterase"/>
    <property type="match status" value="1"/>
</dbReference>
<dbReference type="SUPFAM" id="SSF51126">
    <property type="entry name" value="Pectin lyase-like"/>
    <property type="match status" value="1"/>
</dbReference>
<dbReference type="PROSITE" id="PS00503">
    <property type="entry name" value="PECTINESTERASE_2"/>
    <property type="match status" value="1"/>
</dbReference>
<gene>
    <name type="primary">PME31</name>
    <name type="synonym">ARATH31</name>
    <name type="ordered locus">At3g29090</name>
    <name type="ORF">MXE2.5</name>
</gene>
<comment type="function">
    <text evidence="1 4">Acts in the modification of cell walls via demethylesterification of cell wall pectin (PubMed:18936961). Acts in a blockwise manner, resulting in a cell wall rigidification.</text>
</comment>
<comment type="catalytic activity">
    <reaction evidence="4">
        <text>[(1-&gt;4)-alpha-D-galacturonosyl methyl ester](n) + n H2O = [(1-&gt;4)-alpha-D-galacturonosyl](n) + n methanol + n H(+)</text>
        <dbReference type="Rhea" id="RHEA:22380"/>
        <dbReference type="Rhea" id="RHEA-COMP:14570"/>
        <dbReference type="Rhea" id="RHEA-COMP:14573"/>
        <dbReference type="ChEBI" id="CHEBI:15377"/>
        <dbReference type="ChEBI" id="CHEBI:15378"/>
        <dbReference type="ChEBI" id="CHEBI:17790"/>
        <dbReference type="ChEBI" id="CHEBI:140522"/>
        <dbReference type="ChEBI" id="CHEBI:140523"/>
        <dbReference type="EC" id="3.1.1.11"/>
    </reaction>
</comment>
<comment type="activity regulation">
    <text evidence="4">Does not require salt for activity. Not inhibited by kiwi pectin methylesterase inhibitor (PMEI).</text>
</comment>
<comment type="biophysicochemical properties">
    <phDependence>
        <text evidence="4">Optimum pH is 8.0-8.5.</text>
    </phDependence>
    <temperatureDependence>
        <text evidence="4">Fully active at 0 or 30 degrees Celsius, inactive at 55 degrees Celsius.</text>
    </temperatureDependence>
</comment>
<comment type="pathway">
    <text>Glycan metabolism; pectin degradation; 2-dehydro-3-deoxy-D-gluconate from pectin: step 1/5.</text>
</comment>
<comment type="interaction">
    <interactant intactId="EBI-4466887">
        <id>Q9LVQ0</id>
    </interactant>
    <interactant intactId="EBI-4470690">
        <id>Q93ZX1</id>
        <label>RFC4</label>
    </interactant>
    <organismsDiffer>false</organismsDiffer>
    <experiments>4</experiments>
</comment>
<comment type="tissue specificity">
    <text evidence="3">Expressed in siliques.</text>
</comment>
<comment type="developmental stage">
    <text evidence="3">Expressed during late developmental phases of siliques.</text>
</comment>
<comment type="miscellaneous">
    <text>This is the only member of the pectinesterase family that do not contain a transmembrane or a signal peptide.</text>
</comment>
<comment type="similarity">
    <text evidence="5">Belongs to the pectinesterase family.</text>
</comment>
<name>PME31_ARATH</name>
<feature type="chain" id="PRO_0000371683" description="Pectinesterase 31">
    <location>
        <begin position="1"/>
        <end position="317"/>
    </location>
</feature>
<feature type="active site" description="Proton donor" evidence="2">
    <location>
        <position position="144"/>
    </location>
</feature>
<feature type="active site" description="Nucleophile" evidence="2">
    <location>
        <position position="165"/>
    </location>
</feature>
<feature type="binding site" evidence="1">
    <location>
        <position position="91"/>
    </location>
    <ligand>
        <name>substrate</name>
    </ligand>
</feature>
<feature type="binding site" evidence="1">
    <location>
        <position position="121"/>
    </location>
    <ligand>
        <name>substrate</name>
    </ligand>
</feature>
<feature type="binding site" evidence="1">
    <location>
        <position position="222"/>
    </location>
    <ligand>
        <name>substrate</name>
    </ligand>
</feature>
<feature type="binding site" evidence="1">
    <location>
        <position position="224"/>
    </location>
    <ligand>
        <name>substrate</name>
    </ligand>
</feature>
<feature type="site" description="Transition state stabilizer" evidence="1">
    <location>
        <position position="143"/>
    </location>
</feature>
<keyword id="KW-0063">Aspartyl esterase</keyword>
<keyword id="KW-0378">Hydrolase</keyword>
<keyword id="KW-1185">Reference proteome</keyword>
<reference key="1">
    <citation type="journal article" date="2000" name="DNA Res.">
        <title>Structural analysis of Arabidopsis thaliana chromosome 3. I. Sequence features of the regions of 4,504,864 bp covered by sixty P1 and TAC clones.</title>
        <authorList>
            <person name="Sato S."/>
            <person name="Nakamura Y."/>
            <person name="Kaneko T."/>
            <person name="Katoh T."/>
            <person name="Asamizu E."/>
            <person name="Tabata S."/>
        </authorList>
    </citation>
    <scope>NUCLEOTIDE SEQUENCE [LARGE SCALE GENOMIC DNA]</scope>
    <source>
        <strain>cv. Columbia</strain>
    </source>
</reference>
<reference key="2">
    <citation type="journal article" date="2017" name="Plant J.">
        <title>Araport11: a complete reannotation of the Arabidopsis thaliana reference genome.</title>
        <authorList>
            <person name="Cheng C.Y."/>
            <person name="Krishnakumar V."/>
            <person name="Chan A.P."/>
            <person name="Thibaud-Nissen F."/>
            <person name="Schobel S."/>
            <person name="Town C.D."/>
        </authorList>
    </citation>
    <scope>GENOME REANNOTATION</scope>
    <source>
        <strain>cv. Columbia</strain>
    </source>
</reference>
<reference key="3">
    <citation type="journal article" date="2003" name="Science">
        <title>Empirical analysis of transcriptional activity in the Arabidopsis genome.</title>
        <authorList>
            <person name="Yamada K."/>
            <person name="Lim J."/>
            <person name="Dale J.M."/>
            <person name="Chen H."/>
            <person name="Shinn P."/>
            <person name="Palm C.J."/>
            <person name="Southwick A.M."/>
            <person name="Wu H.C."/>
            <person name="Kim C.J."/>
            <person name="Nguyen M."/>
            <person name="Pham P.K."/>
            <person name="Cheuk R.F."/>
            <person name="Karlin-Newmann G."/>
            <person name="Liu S.X."/>
            <person name="Lam B."/>
            <person name="Sakano H."/>
            <person name="Wu T."/>
            <person name="Yu G."/>
            <person name="Miranda M."/>
            <person name="Quach H.L."/>
            <person name="Tripp M."/>
            <person name="Chang C.H."/>
            <person name="Lee J.M."/>
            <person name="Toriumi M.J."/>
            <person name="Chan M.M."/>
            <person name="Tang C.C."/>
            <person name="Onodera C.S."/>
            <person name="Deng J.M."/>
            <person name="Akiyama K."/>
            <person name="Ansari Y."/>
            <person name="Arakawa T."/>
            <person name="Banh J."/>
            <person name="Banno F."/>
            <person name="Bowser L."/>
            <person name="Brooks S.Y."/>
            <person name="Carninci P."/>
            <person name="Chao Q."/>
            <person name="Choy N."/>
            <person name="Enju A."/>
            <person name="Goldsmith A.D."/>
            <person name="Gurjal M."/>
            <person name="Hansen N.F."/>
            <person name="Hayashizaki Y."/>
            <person name="Johnson-Hopson C."/>
            <person name="Hsuan V.W."/>
            <person name="Iida K."/>
            <person name="Karnes M."/>
            <person name="Khan S."/>
            <person name="Koesema E."/>
            <person name="Ishida J."/>
            <person name="Jiang P.X."/>
            <person name="Jones T."/>
            <person name="Kawai J."/>
            <person name="Kamiya A."/>
            <person name="Meyers C."/>
            <person name="Nakajima M."/>
            <person name="Narusaka M."/>
            <person name="Seki M."/>
            <person name="Sakurai T."/>
            <person name="Satou M."/>
            <person name="Tamse R."/>
            <person name="Vaysberg M."/>
            <person name="Wallender E.K."/>
            <person name="Wong C."/>
            <person name="Yamamura Y."/>
            <person name="Yuan S."/>
            <person name="Shinozaki K."/>
            <person name="Davis R.W."/>
            <person name="Theologis A."/>
            <person name="Ecker J.R."/>
        </authorList>
    </citation>
    <scope>NUCLEOTIDE SEQUENCE [LARGE SCALE MRNA]</scope>
    <source>
        <strain>cv. Columbia</strain>
    </source>
</reference>
<reference key="4">
    <citation type="submission" date="2002-03" db="EMBL/GenBank/DDBJ databases">
        <title>Full-length cDNA from Arabidopsis thaliana.</title>
        <authorList>
            <person name="Brover V.V."/>
            <person name="Troukhan M.E."/>
            <person name="Alexandrov N.A."/>
            <person name="Lu Y.-P."/>
            <person name="Flavell R.B."/>
            <person name="Feldmann K.A."/>
        </authorList>
    </citation>
    <scope>NUCLEOTIDE SEQUENCE [LARGE SCALE MRNA]</scope>
</reference>
<reference key="5">
    <citation type="journal article" date="2004" name="Carbohydr. Res.">
        <title>Pectin methylesterases: sequence-structural features and phylogenetic relationships.</title>
        <authorList>
            <person name="Markovic O."/>
            <person name="Janecek S."/>
        </authorList>
    </citation>
    <scope>GENE FAMILY</scope>
    <scope>NOMENCLATURE</scope>
</reference>
<reference key="6">
    <citation type="journal article" date="2006" name="Planta">
        <title>Comprehensive expression profiling of the pectin methylesterase gene family during silique development in Arabidopsis thaliana.</title>
        <authorList>
            <person name="Louvet R."/>
            <person name="Cavel E."/>
            <person name="Gutierrez L."/>
            <person name="Guenin S."/>
            <person name="Roger D."/>
            <person name="Gillet F."/>
            <person name="Guerineau F."/>
            <person name="Pelloux J."/>
        </authorList>
    </citation>
    <scope>TISSUE SPECIFICITY</scope>
    <scope>DEVELOPMENTAL STAGE</scope>
</reference>
<reference key="7">
    <citation type="journal article" date="2009" name="Planta">
        <title>Activity of an atypical Arabidopsis thaliana pectin methylesterase.</title>
        <authorList>
            <person name="Dedeurwaerder S."/>
            <person name="Menu-Bouaouiche L."/>
            <person name="Mareck A."/>
            <person name="Lerouge P."/>
            <person name="Guerineau F."/>
        </authorList>
    </citation>
    <scope>FUNCTION</scope>
    <scope>CATALYTIC ACTIVITY</scope>
    <scope>BIOPHYSICOCHEMICAL PROPERTIES</scope>
    <scope>ACTIVITY REGULATION</scope>
    <scope>3D-STRUCTURE MODELING</scope>
</reference>